<comment type="function">
    <text evidence="3 7 9 11 12 13 14 16 18 19 20 21 22 24 25">Transcriptional activator that functions by regulating chromatin structure (PubMed:12815073, PubMed:15063171, PubMed:28676122, PubMed:33720012, PubMed:7504178, PubMed:7935842, PubMed:8107823, PubMed:9241251). Overcomes the repressive effects of chromatin by promoting the open chromatin conformation in promoter gene regions, thereby allowing access to other transcription factors (PubMed:26335634, PubMed:28676122, PubMed:33720012, PubMed:8107823). Binds to DNA Polycomb response elements (PREs) at the bithorax complex and to the proximal region of the engrailed promoter, and positively regulates transcription of many genes including homeotic ones (PubMed:12815073, PubMed:12834867). Involved in zygotic genome activation (ZGA), a critical event in early embryonic development during which the developmental control passes from maternally provided mRNAs to the expression of the zygotic genome after fertilization (PubMed:26335634, PubMed:28676122, PubMed:33720012). Binds to the DNA sequence (GA)n, with optimal binding to the pentamer 5'-GAGAG-3' (PubMed:10347208, PubMed:12601174, PubMed:7504178, PubMed:9241251). Binds DNA as an oligomer (PubMed:10347208, PubMed:12601174, PubMed:7504178, PubMed:9241251). May also act as a transcriptional repressor, maintaining the repressed state of genes including lolal, and down-regulating its own transcription (PubMed:12200449). Required for dosage compensation in males and may be involved in oogenesis (PubMed:15020425). Also has a role in nuclear division (PubMed:8620838).</text>
</comment>
<comment type="subunit">
    <text evidence="5 6 8 10 11 12 17">Interacts with Bin1, lolal, corto, ttk and ph-p (PubMed:11256608, PubMed:12384587, PubMed:12771214, PubMed:12834867). Interacts with FACT subunits Ssrp and dre4/SPT16 (PubMed:12815073). Interacts with E(bx) (PubMed:11583616). Upon ecdysone stimulation, interacts with Nup98 (PubMed:28366641).</text>
</comment>
<comment type="interaction">
    <interactant intactId="EBI-300317">
        <id>Q08605</id>
    </interactant>
    <interactant intactId="EBI-300379">
        <id>P41046</id>
        <label>corto</label>
    </interactant>
    <organismsDiffer>false</organismsDiffer>
    <experiments>2</experiments>
</comment>
<comment type="interaction">
    <interactant intactId="EBI-300317">
        <id>Q08605</id>
    </interactant>
    <interactant intactId="EBI-84493">
        <id>Q7KRI2</id>
        <label>lolal</label>
    </interactant>
    <organismsDiffer>false</organismsDiffer>
    <experiments>7</experiments>
</comment>
<comment type="interaction">
    <interactant intactId="EBI-665803">
        <id>Q08605-2</id>
    </interactant>
    <interactant intactId="EBI-129424">
        <id>Q9VEX9</id>
        <label>Bin1</label>
    </interactant>
    <organismsDiffer>false</organismsDiffer>
    <experiments>4</experiments>
</comment>
<comment type="subcellular location">
    <subcellularLocation>
        <location evidence="19 20 25">Nucleus</location>
    </subcellularLocation>
    <subcellularLocation>
        <location evidence="19 22">Chromosome</location>
    </subcellularLocation>
</comment>
<comment type="alternative products">
    <event type="alternative splicing"/>
    <isoform>
        <id>Q08605-1</id>
        <name>A</name>
        <name>F</name>
        <name>GAGA-581</name>
        <sequence type="displayed"/>
    </isoform>
    <isoform>
        <id>Q08605-2</id>
        <name>B</name>
        <name>C</name>
        <name>D</name>
        <name>E</name>
        <name>H</name>
        <name>GAGA-519a</name>
        <name>GAGA-519b</name>
        <sequence type="described" ref="VSP_015537"/>
    </isoform>
    <isoform>
        <id>Q08605-3</id>
        <name>G</name>
        <name>GAGA-566</name>
        <sequence type="described" ref="VSP_015536"/>
    </isoform>
    <isoform>
        <id>Q08605-4</id>
        <name>I</name>
        <sequence type="described" ref="VSP_015538"/>
    </isoform>
</comment>
<comment type="tissue specificity">
    <text evidence="23">Expressed in the central nervous system throughout development.</text>
</comment>
<comment type="developmental stage">
    <text evidence="19 25">Expressed both maternally and zygotically (PubMed:33720012). Expressed ubiquitously during embryogenesis with higher levels found from 9-12 hours after egg laying (PubMed:9241251). Low levels are found in larvae and adults (PubMed:9241251).</text>
</comment>
<comment type="domain">
    <text evidence="3 4">The N-terminal BTB domain mediates protein oligomerization. The C-terminal glutamine-rich region is required for transcriptional activation activity.</text>
</comment>
<comment type="PTM">
    <text>The N-terminus is blocked.</text>
</comment>
<reference key="1">
    <citation type="journal article" date="1993" name="Mol. Cell. Biol.">
        <title>Isolation of cDNAs encoding the Drosophila GAGA transcription factor.</title>
        <authorList>
            <person name="Soeller W.C."/>
            <person name="Oh C.E."/>
            <person name="Kornberg T.B."/>
        </authorList>
    </citation>
    <scope>NUCLEOTIDE SEQUENCE [MRNA] (ISOFORM B)</scope>
    <scope>PROTEIN SEQUENCE OF 393-405 AND 498-518 (ISOFORM B)</scope>
    <scope>FUNCTION</scope>
    <scope>DNA-BINDING</scope>
    <scope>SUBCELLULAR LOCATION</scope>
    <source>
        <strain>Oregon-R</strain>
        <tissue>Embryo</tissue>
    </source>
</reference>
<reference key="2">
    <citation type="journal article" date="1997" name="Nucleic Acids Res.">
        <title>Multiple isoforms of GAGA factor, a critical component of chromatin structure.</title>
        <authorList>
            <person name="Benyajati C."/>
            <person name="Mueller L."/>
            <person name="Xu N."/>
            <person name="Pappano M."/>
            <person name="Gao J."/>
            <person name="Mosammaparast M."/>
            <person name="Conklin D."/>
            <person name="Granok H."/>
            <person name="Craig C."/>
            <person name="Elgin S.C.R."/>
        </authorList>
    </citation>
    <scope>NUCLEOTIDE SEQUENCE [MRNA] (ISOFORMS A AND B)</scope>
    <scope>FUNCTION</scope>
    <scope>HETERODIMERIZATION</scope>
    <scope>SUBCELLULAR LOCATION</scope>
    <scope>DEVELOPMENTAL STAGE</scope>
</reference>
<reference key="3">
    <citation type="journal article" date="2001" name="Genetika">
        <title>Molecular genetic analysis of Thrithorax-like gene encoded transcriptional factor GAGA in Drosophila melanogaster.</title>
        <authorList>
            <person name="Katokhin A.V."/>
            <person name="Pindiurin A.V."/>
            <person name="Fedorova E.V."/>
            <person name="Baricheva E.M."/>
        </authorList>
    </citation>
    <scope>NUCLEOTIDE SEQUENCE [GENOMIC DNA]</scope>
    <source>
        <strain>Canton-S</strain>
    </source>
</reference>
<reference key="4">
    <citation type="journal article" date="2000" name="Science">
        <title>The genome sequence of Drosophila melanogaster.</title>
        <authorList>
            <person name="Adams M.D."/>
            <person name="Celniker S.E."/>
            <person name="Holt R.A."/>
            <person name="Evans C.A."/>
            <person name="Gocayne J.D."/>
            <person name="Amanatides P.G."/>
            <person name="Scherer S.E."/>
            <person name="Li P.W."/>
            <person name="Hoskins R.A."/>
            <person name="Galle R.F."/>
            <person name="George R.A."/>
            <person name="Lewis S.E."/>
            <person name="Richards S."/>
            <person name="Ashburner M."/>
            <person name="Henderson S.N."/>
            <person name="Sutton G.G."/>
            <person name="Wortman J.R."/>
            <person name="Yandell M.D."/>
            <person name="Zhang Q."/>
            <person name="Chen L.X."/>
            <person name="Brandon R.C."/>
            <person name="Rogers Y.-H.C."/>
            <person name="Blazej R.G."/>
            <person name="Champe M."/>
            <person name="Pfeiffer B.D."/>
            <person name="Wan K.H."/>
            <person name="Doyle C."/>
            <person name="Baxter E.G."/>
            <person name="Helt G."/>
            <person name="Nelson C.R."/>
            <person name="Miklos G.L.G."/>
            <person name="Abril J.F."/>
            <person name="Agbayani A."/>
            <person name="An H.-J."/>
            <person name="Andrews-Pfannkoch C."/>
            <person name="Baldwin D."/>
            <person name="Ballew R.M."/>
            <person name="Basu A."/>
            <person name="Baxendale J."/>
            <person name="Bayraktaroglu L."/>
            <person name="Beasley E.M."/>
            <person name="Beeson K.Y."/>
            <person name="Benos P.V."/>
            <person name="Berman B.P."/>
            <person name="Bhandari D."/>
            <person name="Bolshakov S."/>
            <person name="Borkova D."/>
            <person name="Botchan M.R."/>
            <person name="Bouck J."/>
            <person name="Brokstein P."/>
            <person name="Brottier P."/>
            <person name="Burtis K.C."/>
            <person name="Busam D.A."/>
            <person name="Butler H."/>
            <person name="Cadieu E."/>
            <person name="Center A."/>
            <person name="Chandra I."/>
            <person name="Cherry J.M."/>
            <person name="Cawley S."/>
            <person name="Dahlke C."/>
            <person name="Davenport L.B."/>
            <person name="Davies P."/>
            <person name="de Pablos B."/>
            <person name="Delcher A."/>
            <person name="Deng Z."/>
            <person name="Mays A.D."/>
            <person name="Dew I."/>
            <person name="Dietz S.M."/>
            <person name="Dodson K."/>
            <person name="Doup L.E."/>
            <person name="Downes M."/>
            <person name="Dugan-Rocha S."/>
            <person name="Dunkov B.C."/>
            <person name="Dunn P."/>
            <person name="Durbin K.J."/>
            <person name="Evangelista C.C."/>
            <person name="Ferraz C."/>
            <person name="Ferriera S."/>
            <person name="Fleischmann W."/>
            <person name="Fosler C."/>
            <person name="Gabrielian A.E."/>
            <person name="Garg N.S."/>
            <person name="Gelbart W.M."/>
            <person name="Glasser K."/>
            <person name="Glodek A."/>
            <person name="Gong F."/>
            <person name="Gorrell J.H."/>
            <person name="Gu Z."/>
            <person name="Guan P."/>
            <person name="Harris M."/>
            <person name="Harris N.L."/>
            <person name="Harvey D.A."/>
            <person name="Heiman T.J."/>
            <person name="Hernandez J.R."/>
            <person name="Houck J."/>
            <person name="Hostin D."/>
            <person name="Houston K.A."/>
            <person name="Howland T.J."/>
            <person name="Wei M.-H."/>
            <person name="Ibegwam C."/>
            <person name="Jalali M."/>
            <person name="Kalush F."/>
            <person name="Karpen G.H."/>
            <person name="Ke Z."/>
            <person name="Kennison J.A."/>
            <person name="Ketchum K.A."/>
            <person name="Kimmel B.E."/>
            <person name="Kodira C.D."/>
            <person name="Kraft C.L."/>
            <person name="Kravitz S."/>
            <person name="Kulp D."/>
            <person name="Lai Z."/>
            <person name="Lasko P."/>
            <person name="Lei Y."/>
            <person name="Levitsky A.A."/>
            <person name="Li J.H."/>
            <person name="Li Z."/>
            <person name="Liang Y."/>
            <person name="Lin X."/>
            <person name="Liu X."/>
            <person name="Mattei B."/>
            <person name="McIntosh T.C."/>
            <person name="McLeod M.P."/>
            <person name="McPherson D."/>
            <person name="Merkulov G."/>
            <person name="Milshina N.V."/>
            <person name="Mobarry C."/>
            <person name="Morris J."/>
            <person name="Moshrefi A."/>
            <person name="Mount S.M."/>
            <person name="Moy M."/>
            <person name="Murphy B."/>
            <person name="Murphy L."/>
            <person name="Muzny D.M."/>
            <person name="Nelson D.L."/>
            <person name="Nelson D.R."/>
            <person name="Nelson K.A."/>
            <person name="Nixon K."/>
            <person name="Nusskern D.R."/>
            <person name="Pacleb J.M."/>
            <person name="Palazzolo M."/>
            <person name="Pittman G.S."/>
            <person name="Pan S."/>
            <person name="Pollard J."/>
            <person name="Puri V."/>
            <person name="Reese M.G."/>
            <person name="Reinert K."/>
            <person name="Remington K."/>
            <person name="Saunders R.D.C."/>
            <person name="Scheeler F."/>
            <person name="Shen H."/>
            <person name="Shue B.C."/>
            <person name="Siden-Kiamos I."/>
            <person name="Simpson M."/>
            <person name="Skupski M.P."/>
            <person name="Smith T.J."/>
            <person name="Spier E."/>
            <person name="Spradling A.C."/>
            <person name="Stapleton M."/>
            <person name="Strong R."/>
            <person name="Sun E."/>
            <person name="Svirskas R."/>
            <person name="Tector C."/>
            <person name="Turner R."/>
            <person name="Venter E."/>
            <person name="Wang A.H."/>
            <person name="Wang X."/>
            <person name="Wang Z.-Y."/>
            <person name="Wassarman D.A."/>
            <person name="Weinstock G.M."/>
            <person name="Weissenbach J."/>
            <person name="Williams S.M."/>
            <person name="Woodage T."/>
            <person name="Worley K.C."/>
            <person name="Wu D."/>
            <person name="Yang S."/>
            <person name="Yao Q.A."/>
            <person name="Ye J."/>
            <person name="Yeh R.-F."/>
            <person name="Zaveri J.S."/>
            <person name="Zhan M."/>
            <person name="Zhang G."/>
            <person name="Zhao Q."/>
            <person name="Zheng L."/>
            <person name="Zheng X.H."/>
            <person name="Zhong F.N."/>
            <person name="Zhong W."/>
            <person name="Zhou X."/>
            <person name="Zhu S.C."/>
            <person name="Zhu X."/>
            <person name="Smith H.O."/>
            <person name="Gibbs R.A."/>
            <person name="Myers E.W."/>
            <person name="Rubin G.M."/>
            <person name="Venter J.C."/>
        </authorList>
    </citation>
    <scope>NUCLEOTIDE SEQUENCE [LARGE SCALE GENOMIC DNA]</scope>
    <source>
        <strain>Berkeley</strain>
    </source>
</reference>
<reference key="5">
    <citation type="journal article" date="2002" name="Genome Biol.">
        <title>Annotation of the Drosophila melanogaster euchromatic genome: a systematic review.</title>
        <authorList>
            <person name="Misra S."/>
            <person name="Crosby M.A."/>
            <person name="Mungall C.J."/>
            <person name="Matthews B.B."/>
            <person name="Campbell K.S."/>
            <person name="Hradecky P."/>
            <person name="Huang Y."/>
            <person name="Kaminker J.S."/>
            <person name="Millburn G.H."/>
            <person name="Prochnik S.E."/>
            <person name="Smith C.D."/>
            <person name="Tupy J.L."/>
            <person name="Whitfield E.J."/>
            <person name="Bayraktaroglu L."/>
            <person name="Berman B.P."/>
            <person name="Bettencourt B.R."/>
            <person name="Celniker S.E."/>
            <person name="de Grey A.D.N.J."/>
            <person name="Drysdale R.A."/>
            <person name="Harris N.L."/>
            <person name="Richter J."/>
            <person name="Russo S."/>
            <person name="Schroeder A.J."/>
            <person name="Shu S.Q."/>
            <person name="Stapleton M."/>
            <person name="Yamada C."/>
            <person name="Ashburner M."/>
            <person name="Gelbart W.M."/>
            <person name="Rubin G.M."/>
            <person name="Lewis S.E."/>
        </authorList>
    </citation>
    <scope>GENOME REANNOTATION</scope>
    <scope>ALTERNATIVE SPLICING</scope>
    <source>
        <strain>Berkeley</strain>
    </source>
</reference>
<reference key="6">
    <citation type="journal article" date="2002" name="Genome Biol.">
        <title>A Drosophila full-length cDNA resource.</title>
        <authorList>
            <person name="Stapleton M."/>
            <person name="Carlson J.W."/>
            <person name="Brokstein P."/>
            <person name="Yu C."/>
            <person name="Champe M."/>
            <person name="George R.A."/>
            <person name="Guarin H."/>
            <person name="Kronmiller B."/>
            <person name="Pacleb J.M."/>
            <person name="Park S."/>
            <person name="Wan K.H."/>
            <person name="Rubin G.M."/>
            <person name="Celniker S.E."/>
        </authorList>
    </citation>
    <scope>NUCLEOTIDE SEQUENCE [LARGE SCALE MRNA] (ISOFORM B)</scope>
    <source>
        <strain>Berkeley</strain>
        <tissue>Embryo</tissue>
    </source>
</reference>
<reference key="7">
    <citation type="submission" date="2003-02" db="EMBL/GenBank/DDBJ databases">
        <authorList>
            <person name="Stapleton M."/>
            <person name="Brokstein P."/>
            <person name="Hong L."/>
            <person name="Agbayani A."/>
            <person name="Carlson J.W."/>
            <person name="Champe M."/>
            <person name="Chavez C."/>
            <person name="Dorsett V."/>
            <person name="Dresnek D."/>
            <person name="Farfan D."/>
            <person name="Frise E."/>
            <person name="George R.A."/>
            <person name="Gonzalez M."/>
            <person name="Guarin H."/>
            <person name="Kronmiller B."/>
            <person name="Li P.W."/>
            <person name="Liao G."/>
            <person name="Miranda A."/>
            <person name="Mungall C.J."/>
            <person name="Nunoo J."/>
            <person name="Pacleb J.M."/>
            <person name="Paragas V."/>
            <person name="Park S."/>
            <person name="Patel S."/>
            <person name="Phouanenavong S."/>
            <person name="Wan K.H."/>
            <person name="Yu C."/>
            <person name="Lewis S.E."/>
            <person name="Rubin G.M."/>
            <person name="Celniker S.E."/>
        </authorList>
    </citation>
    <scope>NUCLEOTIDE SEQUENCE [MRNA] (ISOFORM A)</scope>
    <source>
        <strain>Berkeley</strain>
        <tissue>Testis</tissue>
    </source>
</reference>
<reference key="8">
    <citation type="submission" date="2002-05" db="EMBL/GenBank/DDBJ databases">
        <title>New forms mRNA of the Trl gene.</title>
        <authorList>
            <person name="Karagodin D.A."/>
            <person name="Baricheva E.M."/>
        </authorList>
    </citation>
    <scope>NUCLEOTIDE SEQUENCE [MRNA] OF 25-197 (ISOFORM G)</scope>
    <scope>NUCLEOTIDE SEQUENCE [MRNA] OF 363-581 (ISOFORM I)</scope>
</reference>
<reference key="9">
    <citation type="journal article" date="1993" name="Genetika">
        <title>The evolutionarily conserved gene Nc70F, expressed in nerve tissue of Drosophila melanogaster, encodes a protein homologous to the mouse delta transcription factor.</title>
        <authorList>
            <person name="Perelygina L.M."/>
            <person name="Baricheva E.M."/>
            <person name="Sebeleva T.E."/>
            <person name="Kokoza V.A."/>
        </authorList>
    </citation>
    <scope>NUCLEOTIDE SEQUENCE [MRNA] OF 136-581 (ISOFORM B)</scope>
    <scope>TISSUE SPECIFICITY</scope>
    <source>
        <tissue>Prepupa</tissue>
    </source>
</reference>
<reference key="10">
    <citation type="journal article" date="2001" name="Mol. Cell">
        <title>Dual functions of largest NURF subunit NURF301 in nucleosome sliding and transcription factor interactions.</title>
        <authorList>
            <person name="Xiao H."/>
            <person name="Sandaltzopoulos R."/>
            <person name="Wang H.-M."/>
            <person name="Hamiche A."/>
            <person name="Ranallo R."/>
            <person name="Lee K.-M."/>
            <person name="Fu D."/>
            <person name="Wu C."/>
        </authorList>
    </citation>
    <scope>PROTEIN SEQUENCE OF 197-209; 274-288 AND 475-494 (ISOFORM B)</scope>
    <scope>INTERACTION WITH E(BX)</scope>
</reference>
<reference key="11">
    <citation type="journal article" date="1994" name="Nature">
        <title>ATP-dependent nucleosome disruption at a heat-shock promoter mediated by binding of GAGA transcription factor.</title>
        <authorList>
            <person name="Tsukiyama T."/>
            <person name="Becker P.B."/>
            <person name="Wu C."/>
        </authorList>
    </citation>
    <scope>FUNCTION</scope>
    <scope>SUBCELLULAR LOCATION</scope>
</reference>
<reference key="12">
    <citation type="journal article" date="1994" name="Nature">
        <title>The Trithorax-like gene encodes the Drosophila GAGA factor.</title>
        <authorList>
            <person name="Farkas G."/>
            <person name="Gausz J."/>
            <person name="Galloni M."/>
            <person name="Reuter G."/>
            <person name="Gyurkovics H."/>
            <person name="Karch F."/>
        </authorList>
    </citation>
    <scope>FUNCTION</scope>
</reference>
<reference key="13">
    <citation type="journal article" date="1996" name="Development">
        <title>The GAGA factor is required in the early Drosophila embryo not only for transcriptional regulation but also for nuclear division.</title>
        <authorList>
            <person name="Bhat K.M."/>
            <person name="Farkas G."/>
            <person name="Karch F."/>
            <person name="Gyurkovics H."/>
            <person name="Gausz J."/>
            <person name="Schedl P."/>
        </authorList>
    </citation>
    <scope>FUNCTION</scope>
</reference>
<reference key="14">
    <citation type="journal article" date="1999" name="J. Biol. Chem.">
        <title>The N-terminal POZ domain of GAGA mediates the formation of oligomers that bind DNA with high affinity and specificity.</title>
        <authorList>
            <person name="Espinas M.L."/>
            <person name="Jimenez-Garcia E."/>
            <person name="Vaquero A."/>
            <person name="Canudas S."/>
            <person name="Bernues J."/>
            <person name="Azorin F."/>
        </authorList>
    </citation>
    <scope>FUNCTION</scope>
    <scope>DNA-BINDING</scope>
    <scope>PROTEIN OLIGOMERIZATION</scope>
    <scope>CHARACTERIZATION OF PTB DOMAIN</scope>
</reference>
<reference key="15">
    <citation type="journal article" date="2000" name="EMBO Rep.">
        <title>The GAGA factor of Drosophila interacts with SAP18, a Sin3-associated polypeptide.</title>
        <authorList>
            <person name="Espinas M.L."/>
            <person name="Canudas S."/>
            <person name="Fanti L."/>
            <person name="Pimpinelli S."/>
            <person name="Casanova J."/>
            <person name="Azorin F."/>
        </authorList>
    </citation>
    <scope>INTERACTION WITH BIN1</scope>
</reference>
<reference key="16">
    <citation type="journal article" date="2000" name="J. Biol. Chem.">
        <title>Functional mapping of the GAGA factor assigns its transcriptional activity to the C-terminal glutamine-rich domain.</title>
        <authorList>
            <person name="Vaquero A."/>
            <person name="Espinas M.L."/>
            <person name="Azorin F."/>
            <person name="Bernues J."/>
        </authorList>
    </citation>
    <scope>CHARACTERIZATION OF GLN-RICH DOMAIN</scope>
</reference>
<reference key="17">
    <citation type="journal article" date="2002" name="J. Biol. Chem.">
        <title>GAGA factor down-regulates its own promoter.</title>
        <authorList>
            <person name="Kosoy A."/>
            <person name="Pagans S."/>
            <person name="Espinas M.L."/>
            <person name="Azorin F."/>
            <person name="Bernues J."/>
        </authorList>
    </citation>
    <scope>FUNCTION</scope>
</reference>
<reference key="18">
    <citation type="journal article" date="2002" name="Nucleic Acids Res.">
        <title>The Drosophila transcription factor tramtrack (TTK) interacts with Trithorax-like (GAGA) and represses GAGA-mediated activation.</title>
        <authorList>
            <person name="Pagans S."/>
            <person name="Ortiz-Lombardia M."/>
            <person name="Espinas M.L."/>
            <person name="Bernues J."/>
            <person name="Azorin F."/>
        </authorList>
    </citation>
    <scope>INTERACTION WITH TTK</scope>
</reference>
<reference key="19">
    <citation type="journal article" date="2003" name="Genes Dev.">
        <title>Drosophila FACT contributes to Hox gene expression through physical and functional interactions with GAGA factor.</title>
        <authorList>
            <person name="Shimojima T."/>
            <person name="Okada M."/>
            <person name="Nakayama T."/>
            <person name="Ueda H."/>
            <person name="Okawa K."/>
            <person name="Iwamatsu A."/>
            <person name="Handa H."/>
            <person name="Hirose S."/>
        </authorList>
    </citation>
    <scope>FUNCTION</scope>
    <scope>INTERACTION WITH SSRP AND DRE4</scope>
</reference>
<reference key="20">
    <citation type="journal article" date="2003" name="Mech. Dev.">
        <title>Trl-GAGA directly interacts with lola like and both are part of the repressive complex of Polycomb group of genes.</title>
        <authorList>
            <person name="Mishra K."/>
            <person name="Chopra V.S."/>
            <person name="Srinivasan A."/>
            <person name="Mishra R.K."/>
        </authorList>
    </citation>
    <scope>FUNCTION</scope>
    <scope>INTERACTION WITH LOLAL AND PHP</scope>
</reference>
<reference key="21">
    <citation type="journal article" date="2003" name="Nucleic Acids Res.">
        <title>The Drosophila Corto protein interacts with Polycomb-group proteins and the GAGA factor.</title>
        <authorList>
            <person name="Salvaing J."/>
            <person name="Lopez A."/>
            <person name="Boivin A."/>
            <person name="Deutsch J.S."/>
            <person name="Peronnet F."/>
        </authorList>
    </citation>
    <scope>INTERACTION WITH CORTO</scope>
</reference>
<reference key="22">
    <citation type="journal article" date="2003" name="Proc. Natl. Acad. Sci. U.S.A.">
        <title>Genomewide analysis of Drosophila GAGA factor target genes reveals context-dependent DNA binding.</title>
        <authorList>
            <person name="van Steensel B."/>
            <person name="Delrow J."/>
            <person name="Bussemaker H.J."/>
        </authorList>
    </citation>
    <scope>FUNCTION</scope>
    <scope>DNA-BINDING SPECIFICITY</scope>
</reference>
<reference key="23">
    <citation type="journal article" date="2004" name="Dev. Biol.">
        <title>Function of the Trithorax-like gene during Drosophila development.</title>
        <authorList>
            <person name="Bejarano F."/>
            <person name="Busturia A."/>
        </authorList>
    </citation>
    <scope>FUNCTION</scope>
</reference>
<reference key="24">
    <citation type="journal article" date="2004" name="Genetics">
        <title>The Drosophila GAGA factor is required for dosage compensation in males and for the formation of the male-specific-lethal complex chromatin entry site at 12DE.</title>
        <authorList>
            <person name="Greenberg A.J."/>
            <person name="Yanowitz J.L."/>
            <person name="Schedl P."/>
        </authorList>
    </citation>
    <scope>FUNCTION</scope>
</reference>
<reference key="25">
    <citation type="journal article" date="2008" name="J. Proteome Res.">
        <title>Phosphoproteome analysis of Drosophila melanogaster embryos.</title>
        <authorList>
            <person name="Zhai B."/>
            <person name="Villen J."/>
            <person name="Beausoleil S.A."/>
            <person name="Mintseris J."/>
            <person name="Gygi S.P."/>
        </authorList>
    </citation>
    <scope>PHOSPHORYLATION [LARGE SCALE ANALYSIS] AT THR-237</scope>
    <scope>IDENTIFICATION BY MASS SPECTROMETRY</scope>
    <source>
        <tissue>Embryo</tissue>
    </source>
</reference>
<reference key="26">
    <citation type="journal article" date="2015" name="Genome Res.">
        <title>Zelda is differentially required for chromatin accessibility, transcription factor binding, and gene expression in the early Drosophila embryo.</title>
        <authorList>
            <person name="Schulz K.N."/>
            <person name="Bondra E.R."/>
            <person name="Moshe A."/>
            <person name="Villalta J.E."/>
            <person name="Lieb J.D."/>
            <person name="Kaplan T."/>
            <person name="McKay D.J."/>
            <person name="Harrison M.M."/>
        </authorList>
    </citation>
    <scope>FUNCTION</scope>
</reference>
<reference key="27">
    <citation type="journal article" date="2017" name="Epigenetics Chromatin">
        <title>Genome-wide search for Zelda-like chromatin signatures identifies GAF as a pioneer factor in early fly development.</title>
        <authorList>
            <person name="Moshe A."/>
            <person name="Kaplan T."/>
        </authorList>
    </citation>
    <scope>FUNCTION</scope>
</reference>
<reference key="28">
    <citation type="journal article" date="2017" name="Mol. Cell">
        <title>Metazoan nuclear pores provide a scaffold for poised genes and mediate induced enhancer-promoter contacts.</title>
        <authorList>
            <person name="Pascual-Garcia P."/>
            <person name="Debo B."/>
            <person name="Aleman J.R."/>
            <person name="Talamas J.A."/>
            <person name="Lan Y."/>
            <person name="Nguyen N.H."/>
            <person name="Won K.J."/>
            <person name="Capelson M."/>
        </authorList>
    </citation>
    <scope>INTERACTION WITH NUP98</scope>
</reference>
<reference key="29">
    <citation type="journal article" date="2021" name="Elife">
        <title>GAF is essential for zygotic genome activation and chromatin accessibility in the early Drosophila embryo.</title>
        <authorList>
            <person name="Gaskill M.M."/>
            <person name="Gibson T.J."/>
            <person name="Larson E.D."/>
            <person name="Harrison M.M."/>
        </authorList>
    </citation>
    <scope>FUNCTION</scope>
    <scope>SUBCELLULAR LOCATION</scope>
    <scope>DEVELOPMENTAL STAGE</scope>
</reference>
<reference key="30">
    <citation type="journal article" date="1997" name="Nat. Struct. Biol.">
        <title>The solution structure of a specific GAGA factor-DNA complex reveals a modular binding mode.</title>
        <authorList>
            <person name="Omichinski J.G."/>
            <person name="Pedone P.V."/>
            <person name="Felsenfeld G."/>
            <person name="Gronenborn A.M."/>
            <person name="Clore G.M."/>
        </authorList>
    </citation>
    <scope>STRUCTURE BY NMR OF 310-372</scope>
</reference>
<proteinExistence type="evidence at protein level"/>
<keyword id="KW-0002">3D-structure</keyword>
<keyword id="KW-0010">Activator</keyword>
<keyword id="KW-0025">Alternative splicing</keyword>
<keyword id="KW-0131">Cell cycle</keyword>
<keyword id="KW-0132">Cell division</keyword>
<keyword id="KW-0156">Chromatin regulator</keyword>
<keyword id="KW-0158">Chromosome</keyword>
<keyword id="KW-0217">Developmental protein</keyword>
<keyword id="KW-0221">Differentiation</keyword>
<keyword id="KW-0903">Direct protein sequencing</keyword>
<keyword id="KW-0238">DNA-binding</keyword>
<keyword id="KW-0479">Metal-binding</keyword>
<keyword id="KW-0498">Mitosis</keyword>
<keyword id="KW-0539">Nucleus</keyword>
<keyword id="KW-0896">Oogenesis</keyword>
<keyword id="KW-0597">Phosphoprotein</keyword>
<keyword id="KW-1185">Reference proteome</keyword>
<keyword id="KW-0678">Repressor</keyword>
<keyword id="KW-0804">Transcription</keyword>
<keyword id="KW-0805">Transcription regulation</keyword>
<keyword id="KW-0862">Zinc</keyword>
<keyword id="KW-0863">Zinc-finger</keyword>
<gene>
    <name type="primary">Trl</name>
    <name type="synonym">Adf-2</name>
    <name type="synonym">GAGA</name>
    <name type="synonym">Nc70F</name>
    <name type="synonym">TFGAGA</name>
    <name type="ORF">CG33261</name>
</gene>
<sequence length="581" mass="62489">MSLPMNSLYSLTWGDYGTSLVSAIQLLRCHGDLVDCTLAAGGRSFPAHKIVLCAASPFLLDLLKNTPCKHPVVMLAGVNANDLEALLEFVYRGEVSVDHAQLPSLLQAAQCLNIQGLAPQTVTKDDYTTHSIQLQHMIPQHHDQDQLIATIATAPQQTVHAQVVEDIHHQGQILQATTQTNAAGQQQTIVTTDAAKHDQAVIQAFLPARKRKPRVKKMSPTAPKISKVEGMDTIMGTPTSSHGSGSVQQVLGENGAEGQLLSSTPIIKSEGQKVETIVTMDPNNMIPVTSANAATGEITPAQGATGSSGGNTSGVLSTPKAKRAKHPPGTEKPRSRSQSEQPATCPICYAVIRQSRNLRRHLELRHFAKPGVKKEKKTTSGKKSSSGSSGSGSGALSSSGSVPQVQTVQSLHTLQGVQVKKDPDAQQQQQQQQQQQQQQQQAMTVSGATGGQVQQQVQQVQQQVQQQQQQQQQQQQQLQHHQIIDSSGNITTATTSAQAAAAAQQQAAGQQQQLVAQSDGSESGAPLSIAQVQTLQGHQIIGNLNQVNMTDFQQQQPQQQQQQQQQQQQQQQQQQQTQQTL</sequence>
<organism>
    <name type="scientific">Drosophila melanogaster</name>
    <name type="common">Fruit fly</name>
    <dbReference type="NCBI Taxonomy" id="7227"/>
    <lineage>
        <taxon>Eukaryota</taxon>
        <taxon>Metazoa</taxon>
        <taxon>Ecdysozoa</taxon>
        <taxon>Arthropoda</taxon>
        <taxon>Hexapoda</taxon>
        <taxon>Insecta</taxon>
        <taxon>Pterygota</taxon>
        <taxon>Neoptera</taxon>
        <taxon>Endopterygota</taxon>
        <taxon>Diptera</taxon>
        <taxon>Brachycera</taxon>
        <taxon>Muscomorpha</taxon>
        <taxon>Ephydroidea</taxon>
        <taxon>Drosophilidae</taxon>
        <taxon>Drosophila</taxon>
        <taxon>Sophophora</taxon>
    </lineage>
</organism>
<name>GAGA_DROME</name>
<evidence type="ECO:0000255" key="1">
    <source>
        <dbReference type="PROSITE-ProRule" id="PRU00037"/>
    </source>
</evidence>
<evidence type="ECO:0000256" key="2">
    <source>
        <dbReference type="SAM" id="MobiDB-lite"/>
    </source>
</evidence>
<evidence type="ECO:0000269" key="3">
    <source>
    </source>
</evidence>
<evidence type="ECO:0000269" key="4">
    <source>
    </source>
</evidence>
<evidence type="ECO:0000269" key="5">
    <source>
    </source>
</evidence>
<evidence type="ECO:0000269" key="6">
    <source>
    </source>
</evidence>
<evidence type="ECO:0000269" key="7">
    <source>
    </source>
</evidence>
<evidence type="ECO:0000269" key="8">
    <source>
    </source>
</evidence>
<evidence type="ECO:0000269" key="9">
    <source>
    </source>
</evidence>
<evidence type="ECO:0000269" key="10">
    <source>
    </source>
</evidence>
<evidence type="ECO:0000269" key="11">
    <source>
    </source>
</evidence>
<evidence type="ECO:0000269" key="12">
    <source>
    </source>
</evidence>
<evidence type="ECO:0000269" key="13">
    <source>
    </source>
</evidence>
<evidence type="ECO:0000269" key="14">
    <source>
    </source>
</evidence>
<evidence type="ECO:0000269" key="15">
    <source>
    </source>
</evidence>
<evidence type="ECO:0000269" key="16">
    <source>
    </source>
</evidence>
<evidence type="ECO:0000269" key="17">
    <source>
    </source>
</evidence>
<evidence type="ECO:0000269" key="18">
    <source>
    </source>
</evidence>
<evidence type="ECO:0000269" key="19">
    <source>
    </source>
</evidence>
<evidence type="ECO:0000269" key="20">
    <source>
    </source>
</evidence>
<evidence type="ECO:0000269" key="21">
    <source>
    </source>
</evidence>
<evidence type="ECO:0000269" key="22">
    <source>
    </source>
</evidence>
<evidence type="ECO:0000269" key="23">
    <source>
    </source>
</evidence>
<evidence type="ECO:0000269" key="24">
    <source>
    </source>
</evidence>
<evidence type="ECO:0000269" key="25">
    <source>
    </source>
</evidence>
<evidence type="ECO:0000303" key="26">
    <source>
    </source>
</evidence>
<evidence type="ECO:0000303" key="27">
    <source>
    </source>
</evidence>
<evidence type="ECO:0000303" key="28">
    <source>
    </source>
</evidence>
<evidence type="ECO:0000303" key="29">
    <source>
    </source>
</evidence>
<evidence type="ECO:0000303" key="30">
    <source>
    </source>
</evidence>
<evidence type="ECO:0000303" key="31">
    <source ref="8"/>
</evidence>
<evidence type="ECO:0000305" key="32"/>
<evidence type="ECO:0007829" key="33">
    <source>
        <dbReference type="PDB" id="1YUI"/>
    </source>
</evidence>
<protein>
    <recommendedName>
        <fullName>Transcription activator GAGA</fullName>
    </recommendedName>
    <alternativeName>
        <fullName>Adh transcription factor 2</fullName>
    </alternativeName>
    <alternativeName>
        <fullName evidence="28">GAGA factor</fullName>
        <shortName evidence="27">GAF</shortName>
    </alternativeName>
    <alternativeName>
        <fullName>Neural conserved at 70F</fullName>
    </alternativeName>
    <alternativeName>
        <fullName>Trithorax-like protein</fullName>
    </alternativeName>
</protein>
<feature type="chain" id="PRO_0000047071" description="Transcription activator GAGA">
    <location>
        <begin position="1"/>
        <end position="581"/>
    </location>
</feature>
<feature type="domain" description="BTB" evidence="1">
    <location>
        <begin position="34"/>
        <end position="99"/>
    </location>
</feature>
<feature type="zinc finger region" description="C2H2-type; degenerate">
    <location>
        <begin position="343"/>
        <end position="366"/>
    </location>
</feature>
<feature type="region of interest" description="Interaction with E(bx)" evidence="6">
    <location>
        <begin position="201"/>
        <end position="397"/>
    </location>
</feature>
<feature type="region of interest" description="Disordered" evidence="2">
    <location>
        <begin position="298"/>
        <end position="343"/>
    </location>
</feature>
<feature type="region of interest" description="Disordered" evidence="2">
    <location>
        <begin position="364"/>
        <end position="404"/>
    </location>
</feature>
<feature type="compositionally biased region" description="Low complexity" evidence="2">
    <location>
        <begin position="381"/>
        <end position="401"/>
    </location>
</feature>
<feature type="modified residue" description="Phosphothreonine" evidence="15">
    <location>
        <position position="237"/>
    </location>
</feature>
<feature type="splice variant" id="VSP_015536" description="In isoform G." evidence="31">
    <location>
        <begin position="65"/>
        <end position="107"/>
    </location>
</feature>
<feature type="splice variant" id="VSP_015537" description="In isoform B." evidence="26 28 29 30">
    <original>TTSGKKSSSGSSGSGSGALSSSGSVPQVQTVQSLHTLQGVQVKKDPDAQQQQQQQQQQQQQQQQAMTVSGATGGQVQQQVQQVQQQVQQQQQQQQQQQQQLQHHQIIDSSGNITTATTSAQAAAAAQQQAAGQQQQLVAQSDGSESGAPLSIAQVQTLQGHQIIGNLNQVNMTDFQQQQPQQQQQQQQQQQQQQQQQQQTQQTL</original>
    <variation>SKSGNDTTLDSSMEMNTTAEGDNTVGSDGAGGAGSAGGQSSGTTPTRVISNAPQAAGAPAILAQGVLPQQQQQQQLQQQHQQHLTATLAGGGQAYIKHEGGGGGGTGQQQQQQAAQQQGMQNVIHIVGDQVFIPQQQQPQPQ</variation>
    <location>
        <begin position="378"/>
        <end position="581"/>
    </location>
</feature>
<feature type="splice variant" id="VSP_015538" description="In isoform I." evidence="31">
    <original>VNMTDFQQQQPQQQQQQQQQQQQQQQQQQQTQQTL</original>
    <variation>GNNKNILVKKVFILKGGNNT</variation>
    <location>
        <begin position="547"/>
        <end position="581"/>
    </location>
</feature>
<feature type="sequence conflict" description="In Ref. 2; AAB81113." evidence="32" ref="2">
    <original>AI</original>
    <variation>DL</variation>
    <location>
        <begin position="23"/>
        <end position="24"/>
    </location>
</feature>
<feature type="sequence conflict" description="In Ref. 1; AAA16072." evidence="32" ref="1">
    <original>V</original>
    <variation>L</variation>
    <location>
        <position position="278"/>
    </location>
</feature>
<feature type="sequence conflict" description="In Ref. 4; AAF49709." evidence="32" ref="4">
    <original>Q</original>
    <variation>QQ</variation>
    <location>
        <position position="441"/>
    </location>
</feature>
<feature type="sequence conflict" description="In Ref. 4; AAF49709." evidence="32" ref="4">
    <original>M</original>
    <variation>I</variation>
    <location>
        <position position="549"/>
    </location>
</feature>
<feature type="helix" evidence="33">
    <location>
        <begin position="334"/>
        <end position="337"/>
    </location>
</feature>
<feature type="turn" evidence="33">
    <location>
        <begin position="346"/>
        <end position="348"/>
    </location>
</feature>
<feature type="strand" evidence="33">
    <location>
        <begin position="351"/>
        <end position="354"/>
    </location>
</feature>
<feature type="helix" evidence="33">
    <location>
        <begin position="355"/>
        <end position="365"/>
    </location>
</feature>
<feature type="turn" evidence="33">
    <location>
        <begin position="366"/>
        <end position="368"/>
    </location>
</feature>
<feature type="sequence conflict" description="In Ref. 2; AAB81113/AAB81117." evidence="32" ref="2">
    <original>A</original>
    <variation>G</variation>
    <location sequence="Q08605-2">
        <position position="437"/>
    </location>
</feature>
<dbReference type="EMBL" id="L22205">
    <property type="protein sequence ID" value="AAA16072.1"/>
    <property type="molecule type" value="mRNA"/>
</dbReference>
<dbReference type="EMBL" id="U16728">
    <property type="protein sequence ID" value="AAB81112.1"/>
    <property type="molecule type" value="mRNA"/>
</dbReference>
<dbReference type="EMBL" id="U18386">
    <property type="protein sequence ID" value="AAB81113.1"/>
    <property type="molecule type" value="mRNA"/>
</dbReference>
<dbReference type="EMBL" id="U68563">
    <property type="protein sequence ID" value="AAB81117.1"/>
    <property type="molecule type" value="mRNA"/>
</dbReference>
<dbReference type="EMBL" id="AJ225042">
    <property type="protein sequence ID" value="CAA12383.1"/>
    <property type="molecule type" value="Genomic_DNA"/>
</dbReference>
<dbReference type="EMBL" id="AJ225042">
    <property type="protein sequence ID" value="CAB86986.1"/>
    <property type="molecule type" value="Genomic_DNA"/>
</dbReference>
<dbReference type="EMBL" id="AE014296">
    <property type="protein sequence ID" value="AAF49709.1"/>
    <property type="molecule type" value="Genomic_DNA"/>
</dbReference>
<dbReference type="EMBL" id="AE014296">
    <property type="protein sequence ID" value="AAF49710.1"/>
    <property type="molecule type" value="Genomic_DNA"/>
</dbReference>
<dbReference type="EMBL" id="AY069651">
    <property type="protein sequence ID" value="AAL39796.1"/>
    <property type="molecule type" value="mRNA"/>
</dbReference>
<dbReference type="EMBL" id="BT003649">
    <property type="protein sequence ID" value="AAO39653.1"/>
    <property type="molecule type" value="mRNA"/>
</dbReference>
<dbReference type="EMBL" id="AJ441087">
    <property type="protein sequence ID" value="CAD29581.1"/>
    <property type="molecule type" value="mRNA"/>
</dbReference>
<dbReference type="EMBL" id="AJ459425">
    <property type="protein sequence ID" value="CAD30828.1"/>
    <property type="molecule type" value="mRNA"/>
</dbReference>
<dbReference type="EMBL" id="X59784">
    <property type="protein sequence ID" value="CAA42446.1"/>
    <property type="molecule type" value="mRNA"/>
</dbReference>
<dbReference type="PIR" id="A54590">
    <property type="entry name" value="A54590"/>
</dbReference>
<dbReference type="RefSeq" id="NP_001034014.1">
    <molecule id="Q08605-2"/>
    <property type="nucleotide sequence ID" value="NM_001038925.3"/>
</dbReference>
<dbReference type="RefSeq" id="NP_996077.1">
    <molecule id="Q08605-2"/>
    <property type="nucleotide sequence ID" value="NM_206355.4"/>
</dbReference>
<dbReference type="RefSeq" id="NP_996078.1">
    <molecule id="Q08605-2"/>
    <property type="nucleotide sequence ID" value="NM_206356.3"/>
</dbReference>
<dbReference type="RefSeq" id="NP_996079.1">
    <molecule id="Q08605-2"/>
    <property type="nucleotide sequence ID" value="NM_206357.3"/>
</dbReference>
<dbReference type="RefSeq" id="NP_996080.1">
    <property type="nucleotide sequence ID" value="NM_206358.4"/>
</dbReference>
<dbReference type="RefSeq" id="NP_996081.1">
    <molecule id="Q08605-2"/>
    <property type="nucleotide sequence ID" value="NM_206359.4"/>
</dbReference>
<dbReference type="RefSeq" id="NP_996082.1">
    <property type="nucleotide sequence ID" value="NM_206360.1"/>
</dbReference>
<dbReference type="PDB" id="1YUI">
    <property type="method" value="NMR"/>
    <property type="chains" value="A=319-372"/>
</dbReference>
<dbReference type="PDB" id="1YUJ">
    <property type="method" value="NMR"/>
    <property type="chains" value="A=319-372"/>
</dbReference>
<dbReference type="PDBsum" id="1YUI"/>
<dbReference type="PDBsum" id="1YUJ"/>
<dbReference type="SMR" id="Q08605"/>
<dbReference type="BioGRID" id="77830">
    <property type="interactions" value="69"/>
</dbReference>
<dbReference type="FunCoup" id="Q08605">
    <property type="interactions" value="910"/>
</dbReference>
<dbReference type="IntAct" id="Q08605">
    <property type="interactions" value="21"/>
</dbReference>
<dbReference type="STRING" id="7227.FBpp0305260"/>
<dbReference type="iPTMnet" id="Q08605"/>
<dbReference type="PaxDb" id="7227-FBpp0305260"/>
<dbReference type="PeptideAtlas" id="Q08605"/>
<dbReference type="DNASU" id="2768981"/>
<dbReference type="EnsemblMetazoa" id="FBtr0075704">
    <molecule id="Q08605-2"/>
    <property type="protein sequence ID" value="FBpp0089416"/>
    <property type="gene ID" value="FBgn0013263"/>
</dbReference>
<dbReference type="EnsemblMetazoa" id="FBtr0075706">
    <molecule id="Q08605-2"/>
    <property type="protein sequence ID" value="FBpp0089418"/>
    <property type="gene ID" value="FBgn0013263"/>
</dbReference>
<dbReference type="EnsemblMetazoa" id="FBtr0075707">
    <molecule id="Q08605-2"/>
    <property type="protein sequence ID" value="FBpp0089419"/>
    <property type="gene ID" value="FBgn0013263"/>
</dbReference>
<dbReference type="EnsemblMetazoa" id="FBtr0075708">
    <molecule id="Q08605-2"/>
    <property type="protein sequence ID" value="FBpp0089411"/>
    <property type="gene ID" value="FBgn0013263"/>
</dbReference>
<dbReference type="EnsemblMetazoa" id="FBtr0100444">
    <molecule id="Q08605-2"/>
    <property type="protein sequence ID" value="FBpp0099866"/>
    <property type="gene ID" value="FBgn0013263"/>
</dbReference>
<dbReference type="GeneID" id="2768981"/>
<dbReference type="KEGG" id="dme:Dmel_CG33261"/>
<dbReference type="AGR" id="FB:FBgn0013263"/>
<dbReference type="CTD" id="2768981"/>
<dbReference type="FlyBase" id="FBgn0013263">
    <property type="gene designation" value="Trl"/>
</dbReference>
<dbReference type="VEuPathDB" id="VectorBase:FBgn0013263"/>
<dbReference type="eggNOG" id="ENOG502S0X1">
    <property type="taxonomic scope" value="Eukaryota"/>
</dbReference>
<dbReference type="InParanoid" id="Q08605"/>
<dbReference type="OMA" id="QVFMPQQ"/>
<dbReference type="OrthoDB" id="10027872at2759"/>
<dbReference type="SignaLink" id="Q08605"/>
<dbReference type="BioGRID-ORCS" id="2768981">
    <property type="hits" value="0 hits in 1 CRISPR screen"/>
</dbReference>
<dbReference type="ChiTaRS" id="Trl">
    <property type="organism name" value="fly"/>
</dbReference>
<dbReference type="GenomeRNAi" id="2768981"/>
<dbReference type="PRO" id="PR:Q08605"/>
<dbReference type="Proteomes" id="UP000000803">
    <property type="component" value="Chromosome 3L"/>
</dbReference>
<dbReference type="Bgee" id="FBgn0013263">
    <property type="expression patterns" value="Expressed in nurse follicle cell (Drosophila) in ovary and 221 other cell types or tissues"/>
</dbReference>
<dbReference type="ExpressionAtlas" id="Q08605">
    <property type="expression patterns" value="baseline and differential"/>
</dbReference>
<dbReference type="GO" id="GO:0000791">
    <property type="term" value="C:euchromatin"/>
    <property type="evidence" value="ECO:0000314"/>
    <property type="project" value="UniProtKB"/>
</dbReference>
<dbReference type="GO" id="GO:0005634">
    <property type="term" value="C:nucleus"/>
    <property type="evidence" value="ECO:0000314"/>
    <property type="project" value="UniProtKB"/>
</dbReference>
<dbReference type="GO" id="GO:0005721">
    <property type="term" value="C:pericentric heterochromatin"/>
    <property type="evidence" value="ECO:0000314"/>
    <property type="project" value="FlyBase"/>
</dbReference>
<dbReference type="GO" id="GO:0005700">
    <property type="term" value="C:polytene chromosome"/>
    <property type="evidence" value="ECO:0000314"/>
    <property type="project" value="UniProtKB"/>
</dbReference>
<dbReference type="GO" id="GO:0032991">
    <property type="term" value="C:protein-containing complex"/>
    <property type="evidence" value="ECO:0000314"/>
    <property type="project" value="UniProtKB"/>
</dbReference>
<dbReference type="GO" id="GO:0003682">
    <property type="term" value="F:chromatin binding"/>
    <property type="evidence" value="ECO:0000314"/>
    <property type="project" value="FlyBase"/>
</dbReference>
<dbReference type="GO" id="GO:0001046">
    <property type="term" value="F:core promoter sequence-specific DNA binding"/>
    <property type="evidence" value="ECO:0000315"/>
    <property type="project" value="CAFA"/>
</dbReference>
<dbReference type="GO" id="GO:0003677">
    <property type="term" value="F:DNA binding"/>
    <property type="evidence" value="ECO:0000314"/>
    <property type="project" value="UniProtKB"/>
</dbReference>
<dbReference type="GO" id="GO:0001216">
    <property type="term" value="F:DNA-binding transcription activator activity"/>
    <property type="evidence" value="ECO:0000314"/>
    <property type="project" value="UniProtKB"/>
</dbReference>
<dbReference type="GO" id="GO:0001228">
    <property type="term" value="F:DNA-binding transcription activator activity, RNA polymerase II-specific"/>
    <property type="evidence" value="ECO:0000315"/>
    <property type="project" value="FlyBase"/>
</dbReference>
<dbReference type="GO" id="GO:0003700">
    <property type="term" value="F:DNA-binding transcription factor activity"/>
    <property type="evidence" value="ECO:0000315"/>
    <property type="project" value="FlyBase"/>
</dbReference>
<dbReference type="GO" id="GO:0000981">
    <property type="term" value="F:DNA-binding transcription factor activity, RNA polymerase II-specific"/>
    <property type="evidence" value="ECO:0000314"/>
    <property type="project" value="UniProtKB"/>
</dbReference>
<dbReference type="GO" id="GO:0042802">
    <property type="term" value="F:identical protein binding"/>
    <property type="evidence" value="ECO:0000314"/>
    <property type="project" value="UniProtKB"/>
</dbReference>
<dbReference type="GO" id="GO:0140677">
    <property type="term" value="F:molecular function activator activity"/>
    <property type="evidence" value="ECO:0000269"/>
    <property type="project" value="DisProt"/>
</dbReference>
<dbReference type="GO" id="GO:0003676">
    <property type="term" value="F:nucleic acid binding"/>
    <property type="evidence" value="ECO:0000269"/>
    <property type="project" value="DisProt"/>
</dbReference>
<dbReference type="GO" id="GO:0031208">
    <property type="term" value="F:POZ domain binding"/>
    <property type="evidence" value="ECO:0000314"/>
    <property type="project" value="FlyBase"/>
</dbReference>
<dbReference type="GO" id="GO:0046982">
    <property type="term" value="F:protein heterodimerization activity"/>
    <property type="evidence" value="ECO:0000353"/>
    <property type="project" value="UniProtKB"/>
</dbReference>
<dbReference type="GO" id="GO:0042803">
    <property type="term" value="F:protein homodimerization activity"/>
    <property type="evidence" value="ECO:0000314"/>
    <property type="project" value="FlyBase"/>
</dbReference>
<dbReference type="GO" id="GO:0001091">
    <property type="term" value="F:RNA polymerase II general transcription initiation factor binding"/>
    <property type="evidence" value="ECO:0000353"/>
    <property type="project" value="FlyBase"/>
</dbReference>
<dbReference type="GO" id="GO:0043565">
    <property type="term" value="F:sequence-specific DNA binding"/>
    <property type="evidence" value="ECO:0000314"/>
    <property type="project" value="UniProtKB"/>
</dbReference>
<dbReference type="GO" id="GO:0008270">
    <property type="term" value="F:zinc ion binding"/>
    <property type="evidence" value="ECO:0000315"/>
    <property type="project" value="CAFA"/>
</dbReference>
<dbReference type="GO" id="GO:1990000">
    <property type="term" value="P:amyloid fibril formation"/>
    <property type="evidence" value="ECO:0000315"/>
    <property type="project" value="CAFA"/>
</dbReference>
<dbReference type="GO" id="GO:0051301">
    <property type="term" value="P:cell division"/>
    <property type="evidence" value="ECO:0007669"/>
    <property type="project" value="UniProtKB-KW"/>
</dbReference>
<dbReference type="GO" id="GO:0006325">
    <property type="term" value="P:chromatin organization"/>
    <property type="evidence" value="ECO:0000303"/>
    <property type="project" value="FlyBase"/>
</dbReference>
<dbReference type="GO" id="GO:0006338">
    <property type="term" value="P:chromatin remodeling"/>
    <property type="evidence" value="ECO:0000314"/>
    <property type="project" value="UniProtKB"/>
</dbReference>
<dbReference type="GO" id="GO:0031507">
    <property type="term" value="P:heterochromatin formation"/>
    <property type="evidence" value="ECO:0000314"/>
    <property type="project" value="FlyBase"/>
</dbReference>
<dbReference type="GO" id="GO:0007476">
    <property type="term" value="P:imaginal disc-derived wing morphogenesis"/>
    <property type="evidence" value="ECO:0000315"/>
    <property type="project" value="FlyBase"/>
</dbReference>
<dbReference type="GO" id="GO:0160021">
    <property type="term" value="P:maternal-to-zygotic transition of gene expression"/>
    <property type="evidence" value="ECO:0000314"/>
    <property type="project" value="UniProtKB"/>
</dbReference>
<dbReference type="GO" id="GO:0045892">
    <property type="term" value="P:negative regulation of DNA-templated transcription"/>
    <property type="evidence" value="ECO:0000316"/>
    <property type="project" value="FlyBase"/>
</dbReference>
<dbReference type="GO" id="GO:0000280">
    <property type="term" value="P:nuclear division"/>
    <property type="evidence" value="ECO:0000315"/>
    <property type="project" value="FlyBase"/>
</dbReference>
<dbReference type="GO" id="GO:0034728">
    <property type="term" value="P:nucleosome organization"/>
    <property type="evidence" value="ECO:0000314"/>
    <property type="project" value="UniProtKB"/>
</dbReference>
<dbReference type="GO" id="GO:0048477">
    <property type="term" value="P:oogenesis"/>
    <property type="evidence" value="ECO:0000315"/>
    <property type="project" value="FlyBase"/>
</dbReference>
<dbReference type="GO" id="GO:0045893">
    <property type="term" value="P:positive regulation of DNA-templated transcription"/>
    <property type="evidence" value="ECO:0000314"/>
    <property type="project" value="UniProtKB"/>
</dbReference>
<dbReference type="GO" id="GO:0045944">
    <property type="term" value="P:positive regulation of transcription by RNA polymerase II"/>
    <property type="evidence" value="ECO:0000315"/>
    <property type="project" value="FlyBase"/>
</dbReference>
<dbReference type="GO" id="GO:0006357">
    <property type="term" value="P:regulation of transcription by RNA polymerase II"/>
    <property type="evidence" value="ECO:0000318"/>
    <property type="project" value="GO_Central"/>
</dbReference>
<dbReference type="GO" id="GO:0035075">
    <property type="term" value="P:response to ecdysone"/>
    <property type="evidence" value="ECO:0000314"/>
    <property type="project" value="UniProtKB"/>
</dbReference>
<dbReference type="GO" id="GO:0007549">
    <property type="term" value="P:sex-chromosome dosage compensation"/>
    <property type="evidence" value="ECO:0000315"/>
    <property type="project" value="FlyBase"/>
</dbReference>
<dbReference type="GO" id="GO:0007283">
    <property type="term" value="P:spermatogenesis"/>
    <property type="evidence" value="ECO:0000315"/>
    <property type="project" value="FlyBase"/>
</dbReference>
<dbReference type="GO" id="GO:0035186">
    <property type="term" value="P:syncytial blastoderm mitotic cell cycle"/>
    <property type="evidence" value="ECO:0000315"/>
    <property type="project" value="FlyBase"/>
</dbReference>
<dbReference type="CDD" id="cd18315">
    <property type="entry name" value="BTB_POZ_BAB-like"/>
    <property type="match status" value="1"/>
</dbReference>
<dbReference type="DisProt" id="DP00328"/>
<dbReference type="FunFam" id="3.30.160.60:FF:001439">
    <property type="entry name" value="Trithorax-like, isoform C"/>
    <property type="match status" value="1"/>
</dbReference>
<dbReference type="FunFam" id="3.30.710.10:FF:000096">
    <property type="entry name" value="Trithorax-like, isoform C"/>
    <property type="match status" value="1"/>
</dbReference>
<dbReference type="Gene3D" id="3.30.160.60">
    <property type="entry name" value="Classic Zinc Finger"/>
    <property type="match status" value="1"/>
</dbReference>
<dbReference type="Gene3D" id="3.30.710.10">
    <property type="entry name" value="Potassium Channel Kv1.1, Chain A"/>
    <property type="match status" value="1"/>
</dbReference>
<dbReference type="InterPro" id="IPR000210">
    <property type="entry name" value="BTB/POZ_dom"/>
</dbReference>
<dbReference type="InterPro" id="IPR051095">
    <property type="entry name" value="Dros_DevTransReg"/>
</dbReference>
<dbReference type="InterPro" id="IPR011333">
    <property type="entry name" value="SKP1/BTB/POZ_sf"/>
</dbReference>
<dbReference type="InterPro" id="IPR013087">
    <property type="entry name" value="Znf_C2H2_type"/>
</dbReference>
<dbReference type="InterPro" id="IPR015318">
    <property type="entry name" value="Znf_GAGA-bd_fac"/>
</dbReference>
<dbReference type="PANTHER" id="PTHR23110">
    <property type="entry name" value="BTB DOMAIN TRANSCRIPTION FACTOR"/>
    <property type="match status" value="1"/>
</dbReference>
<dbReference type="PANTHER" id="PTHR23110:SF10">
    <property type="entry name" value="TRANSCRIPTION FACTOR GAGA"/>
    <property type="match status" value="1"/>
</dbReference>
<dbReference type="Pfam" id="PF00651">
    <property type="entry name" value="BTB"/>
    <property type="match status" value="1"/>
</dbReference>
<dbReference type="Pfam" id="PF09237">
    <property type="entry name" value="GAGA"/>
    <property type="match status" value="1"/>
</dbReference>
<dbReference type="SMART" id="SM00225">
    <property type="entry name" value="BTB"/>
    <property type="match status" value="1"/>
</dbReference>
<dbReference type="SUPFAM" id="SSF54695">
    <property type="entry name" value="POZ domain"/>
    <property type="match status" value="1"/>
</dbReference>
<dbReference type="PROSITE" id="PS50097">
    <property type="entry name" value="BTB"/>
    <property type="match status" value="1"/>
</dbReference>
<dbReference type="PROSITE" id="PS00028">
    <property type="entry name" value="ZINC_FINGER_C2H2_1"/>
    <property type="match status" value="1"/>
</dbReference>
<accession>Q08605</accession>
<accession>O18349</accession>
<accession>O18350</accession>
<accession>O18526</accession>
<accession>Q08083</accession>
<accession>Q7JN57</accession>
<accession>Q8MYL3</accession>
<accession>Q8T387</accession>
<accession>Q9V3X7</accession>
<accession>Q9VUH2</accession>